<evidence type="ECO:0000250" key="1">
    <source>
        <dbReference type="UniProtKB" id="F9USS9"/>
    </source>
</evidence>
<evidence type="ECO:0000269" key="2">
    <source>
    </source>
</evidence>
<evidence type="ECO:0000303" key="3">
    <source>
    </source>
</evidence>
<evidence type="ECO:0000305" key="4"/>
<evidence type="ECO:0000305" key="5">
    <source>
    </source>
</evidence>
<evidence type="ECO:0000312" key="6">
    <source>
        <dbReference type="EMBL" id="ADL69171.1"/>
    </source>
</evidence>
<evidence type="ECO:0007829" key="7">
    <source>
        <dbReference type="PDB" id="2YJG"/>
    </source>
</evidence>
<feature type="chain" id="PRO_0000441652" description="Lactate racemase">
    <location>
        <begin position="1"/>
        <end position="426"/>
    </location>
</feature>
<feature type="active site" description="Proton donor/acceptor" evidence="1">
    <location>
        <position position="108"/>
    </location>
</feature>
<feature type="active site" description="Proton donor/acceptor" evidence="1">
    <location>
        <position position="174"/>
    </location>
</feature>
<feature type="binding site" evidence="1">
    <location>
        <begin position="72"/>
        <end position="75"/>
    </location>
    <ligand>
        <name>Ni(II)-pyridinium-3,5-bisthiocarboxylate mononucleotide</name>
        <dbReference type="ChEBI" id="CHEBI:137373"/>
    </ligand>
</feature>
<feature type="binding site" description="covalent" evidence="1">
    <location>
        <position position="184"/>
    </location>
    <ligand>
        <name>Ni(II)-pyridinium-3,5-bisthiocarboxylate mononucleotide</name>
        <dbReference type="ChEBI" id="CHEBI:137373"/>
    </ligand>
</feature>
<feature type="binding site" evidence="1">
    <location>
        <position position="200"/>
    </location>
    <ligand>
        <name>Ni(II)-pyridinium-3,5-bisthiocarboxylate mononucleotide</name>
        <dbReference type="ChEBI" id="CHEBI:137373"/>
    </ligand>
    <ligandPart>
        <name>Ni</name>
        <dbReference type="ChEBI" id="CHEBI:28112"/>
    </ligandPart>
</feature>
<feature type="binding site" evidence="1">
    <location>
        <position position="295"/>
    </location>
    <ligand>
        <name>substrate</name>
    </ligand>
</feature>
<feature type="binding site" evidence="1">
    <location>
        <position position="298"/>
    </location>
    <ligand>
        <name>substrate</name>
    </ligand>
</feature>
<feature type="strand" evidence="7">
    <location>
        <begin position="3"/>
        <end position="8"/>
    </location>
</feature>
<feature type="strand" evidence="7">
    <location>
        <begin position="11"/>
        <end position="16"/>
    </location>
</feature>
<feature type="helix" evidence="7">
    <location>
        <begin position="19"/>
        <end position="21"/>
    </location>
</feature>
<feature type="strand" evidence="7">
    <location>
        <begin position="22"/>
        <end position="25"/>
    </location>
</feature>
<feature type="helix" evidence="7">
    <location>
        <begin position="39"/>
        <end position="48"/>
    </location>
</feature>
<feature type="strand" evidence="7">
    <location>
        <begin position="51"/>
        <end position="53"/>
    </location>
</feature>
<feature type="helix" evidence="7">
    <location>
        <begin position="56"/>
        <end position="59"/>
    </location>
</feature>
<feature type="turn" evidence="7">
    <location>
        <begin position="60"/>
        <end position="62"/>
    </location>
</feature>
<feature type="strand" evidence="7">
    <location>
        <begin position="66"/>
        <end position="71"/>
    </location>
</feature>
<feature type="helix" evidence="7">
    <location>
        <begin position="79"/>
        <end position="91"/>
    </location>
</feature>
<feature type="strand" evidence="7">
    <location>
        <begin position="99"/>
        <end position="104"/>
    </location>
</feature>
<feature type="helix" evidence="7">
    <location>
        <begin position="113"/>
        <end position="120"/>
    </location>
</feature>
<feature type="helix" evidence="7">
    <location>
        <begin position="122"/>
        <end position="127"/>
    </location>
</feature>
<feature type="strand" evidence="7">
    <location>
        <begin position="128"/>
        <end position="132"/>
    </location>
</feature>
<feature type="helix" evidence="7">
    <location>
        <begin position="138"/>
        <end position="140"/>
    </location>
</feature>
<feature type="strand" evidence="7">
    <location>
        <begin position="141"/>
        <end position="146"/>
    </location>
</feature>
<feature type="strand" evidence="7">
    <location>
        <begin position="152"/>
        <end position="156"/>
    </location>
</feature>
<feature type="helix" evidence="7">
    <location>
        <begin position="157"/>
        <end position="161"/>
    </location>
</feature>
<feature type="strand" evidence="7">
    <location>
        <begin position="163"/>
        <end position="170"/>
    </location>
</feature>
<feature type="turn" evidence="7">
    <location>
        <begin position="175"/>
        <end position="177"/>
    </location>
</feature>
<feature type="strand" evidence="7">
    <location>
        <begin position="178"/>
        <end position="181"/>
    </location>
</feature>
<feature type="helix" evidence="7">
    <location>
        <begin position="182"/>
        <end position="185"/>
    </location>
</feature>
<feature type="turn" evidence="7">
    <location>
        <begin position="186"/>
        <end position="190"/>
    </location>
</feature>
<feature type="helix" evidence="7">
    <location>
        <begin position="193"/>
        <end position="198"/>
    </location>
</feature>
<feature type="helix" evidence="7">
    <location>
        <begin position="202"/>
        <end position="206"/>
    </location>
</feature>
<feature type="helix" evidence="7">
    <location>
        <begin position="219"/>
        <end position="230"/>
    </location>
</feature>
<feature type="strand" evidence="7">
    <location>
        <begin position="233"/>
        <end position="241"/>
    </location>
</feature>
<feature type="strand" evidence="7">
    <location>
        <begin position="247"/>
        <end position="254"/>
    </location>
</feature>
<feature type="helix" evidence="7">
    <location>
        <begin position="257"/>
        <end position="270"/>
    </location>
</feature>
<feature type="strand" evidence="7">
    <location>
        <begin position="271"/>
        <end position="274"/>
    </location>
</feature>
<feature type="strand" evidence="7">
    <location>
        <begin position="277"/>
        <end position="283"/>
    </location>
</feature>
<feature type="turn" evidence="7">
    <location>
        <begin position="287"/>
        <end position="290"/>
    </location>
</feature>
<feature type="helix" evidence="7">
    <location>
        <begin position="293"/>
        <end position="305"/>
    </location>
</feature>
<feature type="strand" evidence="7">
    <location>
        <begin position="307"/>
        <end position="316"/>
    </location>
</feature>
<feature type="turn" evidence="7">
    <location>
        <begin position="320"/>
        <end position="323"/>
    </location>
</feature>
<feature type="helix" evidence="7">
    <location>
        <begin position="326"/>
        <end position="333"/>
    </location>
</feature>
<feature type="strand" evidence="7">
    <location>
        <begin position="335"/>
        <end position="337"/>
    </location>
</feature>
<feature type="helix" evidence="7">
    <location>
        <begin position="338"/>
        <end position="346"/>
    </location>
</feature>
<feature type="helix" evidence="7">
    <location>
        <begin position="357"/>
        <end position="369"/>
    </location>
</feature>
<feature type="strand" evidence="7">
    <location>
        <begin position="371"/>
        <end position="375"/>
    </location>
</feature>
<feature type="helix" evidence="7">
    <location>
        <begin position="378"/>
        <end position="380"/>
    </location>
</feature>
<feature type="helix" evidence="7">
    <location>
        <begin position="381"/>
        <end position="386"/>
    </location>
</feature>
<feature type="strand" evidence="7">
    <location>
        <begin position="390"/>
        <end position="394"/>
    </location>
</feature>
<feature type="helix" evidence="7">
    <location>
        <begin position="395"/>
        <end position="405"/>
    </location>
</feature>
<feature type="strand" evidence="7">
    <location>
        <begin position="412"/>
        <end position="416"/>
    </location>
</feature>
<feature type="strand" evidence="7">
    <location>
        <begin position="418"/>
        <end position="420"/>
    </location>
</feature>
<feature type="strand" evidence="7">
    <location>
        <begin position="422"/>
        <end position="425"/>
    </location>
</feature>
<keyword id="KW-0002">3D-structure</keyword>
<keyword id="KW-0413">Isomerase</keyword>
<keyword id="KW-0479">Metal-binding</keyword>
<keyword id="KW-0533">Nickel</keyword>
<keyword id="KW-1185">Reference proteome</keyword>
<organism>
    <name type="scientific">Thermoanaerobacterium thermosaccharolyticum (strain ATCC 7956 / DSM 571 / NCIMB 9385 / NCA 3814 / NCTC 13789 / WDCM 00135 / 2032)</name>
    <name type="common">Clostridium thermosaccharolyticum</name>
    <dbReference type="NCBI Taxonomy" id="580327"/>
    <lineage>
        <taxon>Bacteria</taxon>
        <taxon>Bacillati</taxon>
        <taxon>Bacillota</taxon>
        <taxon>Clostridia</taxon>
        <taxon>Thermoanaerobacterales</taxon>
        <taxon>Thermoanaerobacteraceae</taxon>
        <taxon>Thermoanaerobacterium</taxon>
    </lineage>
</organism>
<dbReference type="EC" id="5.1.2.1" evidence="2"/>
<dbReference type="EMBL" id="CP002171">
    <property type="protein sequence ID" value="ADL69171.1"/>
    <property type="molecule type" value="Genomic_DNA"/>
</dbReference>
<dbReference type="RefSeq" id="WP_013298138.1">
    <property type="nucleotide sequence ID" value="NC_014410.1"/>
</dbReference>
<dbReference type="PDB" id="2YJG">
    <property type="method" value="X-ray"/>
    <property type="resolution" value="1.80 A"/>
    <property type="chains" value="A/B=1-426"/>
</dbReference>
<dbReference type="PDBsum" id="2YJG"/>
<dbReference type="SMR" id="D9TQ02"/>
<dbReference type="STRING" id="580327.Tthe_1662"/>
<dbReference type="GeneID" id="93864498"/>
<dbReference type="KEGG" id="ttm:Tthe_1662"/>
<dbReference type="eggNOG" id="COG3875">
    <property type="taxonomic scope" value="Bacteria"/>
</dbReference>
<dbReference type="HOGENOM" id="CLU_050189_0_0_9"/>
<dbReference type="OrthoDB" id="9770545at2"/>
<dbReference type="EvolutionaryTrace" id="D9TQ02"/>
<dbReference type="Proteomes" id="UP000001626">
    <property type="component" value="Chromosome"/>
</dbReference>
<dbReference type="GO" id="GO:0050043">
    <property type="term" value="F:lactate racemase activity"/>
    <property type="evidence" value="ECO:0007669"/>
    <property type="project" value="UniProtKB-EC"/>
</dbReference>
<dbReference type="GO" id="GO:0046872">
    <property type="term" value="F:metal ion binding"/>
    <property type="evidence" value="ECO:0007669"/>
    <property type="project" value="UniProtKB-KW"/>
</dbReference>
<dbReference type="Gene3D" id="3.40.50.11440">
    <property type="match status" value="1"/>
</dbReference>
<dbReference type="Gene3D" id="3.90.226.30">
    <property type="match status" value="1"/>
</dbReference>
<dbReference type="InterPro" id="IPR048068">
    <property type="entry name" value="LarA-like"/>
</dbReference>
<dbReference type="InterPro" id="IPR043166">
    <property type="entry name" value="LarA-like_C"/>
</dbReference>
<dbReference type="InterPro" id="IPR018657">
    <property type="entry name" value="LarA-like_N"/>
</dbReference>
<dbReference type="InterPro" id="IPR048520">
    <property type="entry name" value="LarA_C"/>
</dbReference>
<dbReference type="InterPro" id="IPR047926">
    <property type="entry name" value="Ni_dep_LarA"/>
</dbReference>
<dbReference type="NCBIfam" id="NF033504">
    <property type="entry name" value="Ni_dep_LarA"/>
    <property type="match status" value="1"/>
</dbReference>
<dbReference type="PANTHER" id="PTHR33171">
    <property type="entry name" value="LAR_N DOMAIN-CONTAINING PROTEIN"/>
    <property type="match status" value="1"/>
</dbReference>
<dbReference type="PANTHER" id="PTHR33171:SF17">
    <property type="entry name" value="LARA-LIKE N-TERMINAL DOMAIN-CONTAINING PROTEIN"/>
    <property type="match status" value="1"/>
</dbReference>
<dbReference type="Pfam" id="PF09861">
    <property type="entry name" value="Lar_N"/>
    <property type="match status" value="1"/>
</dbReference>
<dbReference type="Pfam" id="PF21113">
    <property type="entry name" value="LarA_C"/>
    <property type="match status" value="1"/>
</dbReference>
<protein>
    <recommendedName>
        <fullName evidence="3">Lactate racemase</fullName>
        <shortName evidence="3">Lar</shortName>
        <ecNumber evidence="2">5.1.2.1</ecNumber>
    </recommendedName>
</protein>
<gene>
    <name evidence="3" type="primary">larA</name>
    <name evidence="6" type="ordered locus">Tthe_1662</name>
</gene>
<sequence>MANIEIPYGKSKLAFDLPDERIQGILRSKAGSYKVNMSEEDIVKRALENPIGTKRLQDLAEGKKNIVIITSDHTRPVPSRITLPLLLDEIRKKNKSANVKILIATGFHRGTTLQEMKAKFGEDLVENEQFVVHDSRNSENMELIGTLPSGGKLEINKLAVEADLLVAEGFIEPHFFAGFSGGRKSILPGIASVQCILANHCSEFIKNPYARTGVLENNPIHRDMIYAAKKANLAFILNVVIDSSHKIVNAFAGHSEKAHLKGCEFVSEIATVNAKPADIVITSNGGYPLDQNIYQSVKGMTAGEAACKDGGVIIIAAECADGHGGEGFYRWFKESKDPQDVMNKILSRGRDETLPDQWEAQILARILINHKVIMVTDSKNYEYVKDMFMTPAKDLGEALKIAESIVNNDSKINVIPDGVSVIVREK</sequence>
<name>LARA_THETC</name>
<accession>D9TQ02</accession>
<proteinExistence type="evidence at protein level"/>
<reference key="1">
    <citation type="submission" date="2010-08" db="EMBL/GenBank/DDBJ databases">
        <title>Complete sequence of Thermoanaerobacterium thermosaccharolyticum DSM 571.</title>
        <authorList>
            <consortium name="US DOE Joint Genome Institute"/>
            <person name="Lucas S."/>
            <person name="Copeland A."/>
            <person name="Lapidus A."/>
            <person name="Cheng J.-F."/>
            <person name="Bruce D."/>
            <person name="Goodwin L."/>
            <person name="Pitluck S."/>
            <person name="Teshima H."/>
            <person name="Detter J.C."/>
            <person name="Han C."/>
            <person name="Tapia R."/>
            <person name="Land M."/>
            <person name="Hauser L."/>
            <person name="Chang Y.-J."/>
            <person name="Jeffries C."/>
            <person name="Kyrpides N."/>
            <person name="Ivanova N."/>
            <person name="Mikhailova N."/>
            <person name="Hemme C.L."/>
            <person name="Woyke T."/>
        </authorList>
    </citation>
    <scope>NUCLEOTIDE SEQUENCE [LARGE SCALE GENOMIC DNA]</scope>
    <source>
        <strain>ATCC 7956 / DSM 571 / NCIMB 9385 / NCA 3814 / NCTC 13789 / WDCM 00135 / 2032</strain>
    </source>
</reference>
<reference key="2">
    <citation type="journal article" date="2014" name="Nat. Commun.">
        <title>Lactate racemase is a nickel-dependent enzyme activated by a widespread maturation system.</title>
        <authorList>
            <person name="Desguin B."/>
            <person name="Goffin P."/>
            <person name="Viaene E."/>
            <person name="Kleerebezem M."/>
            <person name="Martin-Diaconescu V."/>
            <person name="Maroney M.J."/>
            <person name="Declercq J.P."/>
            <person name="Soumillion P."/>
            <person name="Hols P."/>
        </authorList>
    </citation>
    <scope>X-RAY CRYSTALLOGRAPHY (1.80 ANGSTROMS)</scope>
    <scope>FUNCTION</scope>
    <scope>CATALYTIC ACTIVITY</scope>
    <scope>COFACTOR</scope>
    <scope>BIOPHYSICOCHEMICAL PROPERTIES</scope>
    <scope>ACTIVITY REGULATION</scope>
    <scope>SUBUNIT</scope>
</reference>
<comment type="function">
    <text evidence="2">Catalyzes the interconversion between the D- and L-isomers of lactate.</text>
</comment>
<comment type="catalytic activity">
    <reaction evidence="2">
        <text>(S)-lactate = (R)-lactate</text>
        <dbReference type="Rhea" id="RHEA:10960"/>
        <dbReference type="ChEBI" id="CHEBI:16004"/>
        <dbReference type="ChEBI" id="CHEBI:16651"/>
        <dbReference type="EC" id="5.1.2.1"/>
    </reaction>
</comment>
<comment type="cofactor">
    <cofactor evidence="1">
        <name>Ni(II)-pyridinium-3,5-bisthiocarboxylate mononucleotide</name>
        <dbReference type="ChEBI" id="CHEBI:137373"/>
    </cofactor>
    <text evidence="1 2">Was originally shown to use Ni(2+) as a cofactor (PubMed:24710389), but in fact, the cofactor is a (SCS)Ni complex, a nicotinic acid mononucleotide derivative that is covalently attached to Lys-184 and forms a tridentate pincer complex that coordinates nickel through one metal-carbon and two metal-sulfur bonds (By similarity).</text>
</comment>
<comment type="activity regulation">
    <text evidence="1 5">Activation of the apo-enzyme requires the three accessory proteins LarB, LarE and LarC, that are involved in the biosynthesis of the nickel-pincer cofactor of LarA.</text>
</comment>
<comment type="biophysicochemical properties">
    <kinetics>
        <KM evidence="2">8 mM for L-lactate</KM>
        <KM evidence="2">3 mM for D-lactate</KM>
        <text evidence="2">kcat is 986 sec(-1) for conversion of L-lactate to D-lactate. kcat is 551 sec(-1) for conversion of D-lactate to L-lactate.</text>
    </kinetics>
</comment>
<comment type="subunit">
    <text evidence="5">Homodimer.</text>
</comment>
<comment type="similarity">
    <text evidence="4">Belongs to the lactate racemase family.</text>
</comment>